<keyword id="KW-0143">Chaperone</keyword>
<keyword id="KW-0963">Cytoplasm</keyword>
<keyword id="KW-0346">Stress response</keyword>
<feature type="chain" id="PRO_1000164210" description="Protein GrpE">
    <location>
        <begin position="1"/>
        <end position="204"/>
    </location>
</feature>
<feature type="region of interest" description="Disordered" evidence="2">
    <location>
        <begin position="1"/>
        <end position="32"/>
    </location>
</feature>
<feature type="compositionally biased region" description="Basic and acidic residues" evidence="2">
    <location>
        <begin position="1"/>
        <end position="12"/>
    </location>
</feature>
<feature type="compositionally biased region" description="Low complexity" evidence="2">
    <location>
        <begin position="17"/>
        <end position="26"/>
    </location>
</feature>
<comment type="function">
    <text evidence="1">Participates actively in the response to hyperosmotic and heat shock by preventing the aggregation of stress-denatured proteins, in association with DnaK and GrpE. It is the nucleotide exchange factor for DnaK and may function as a thermosensor. Unfolded proteins bind initially to DnaJ; upon interaction with the DnaJ-bound protein, DnaK hydrolyzes its bound ATP, resulting in the formation of a stable complex. GrpE releases ADP from DnaK; ATP binding to DnaK triggers the release of the substrate protein, thus completing the reaction cycle. Several rounds of ATP-dependent interactions between DnaJ, DnaK and GrpE are required for fully efficient folding.</text>
</comment>
<comment type="subunit">
    <text evidence="1">Homodimer.</text>
</comment>
<comment type="subcellular location">
    <subcellularLocation>
        <location evidence="1">Cytoplasm</location>
    </subcellularLocation>
</comment>
<comment type="similarity">
    <text evidence="1">Belongs to the GrpE family.</text>
</comment>
<evidence type="ECO:0000255" key="1">
    <source>
        <dbReference type="HAMAP-Rule" id="MF_01151"/>
    </source>
</evidence>
<evidence type="ECO:0000256" key="2">
    <source>
        <dbReference type="SAM" id="MobiDB-lite"/>
    </source>
</evidence>
<proteinExistence type="inferred from homology"/>
<organism>
    <name type="scientific">Pseudoalteromonas atlantica (strain T6c / ATCC BAA-1087)</name>
    <dbReference type="NCBI Taxonomy" id="3042615"/>
    <lineage>
        <taxon>Bacteria</taxon>
        <taxon>Pseudomonadati</taxon>
        <taxon>Pseudomonadota</taxon>
        <taxon>Gammaproteobacteria</taxon>
        <taxon>Alteromonadales</taxon>
        <taxon>Alteromonadaceae</taxon>
        <taxon>Paraglaciecola</taxon>
    </lineage>
</organism>
<sequence length="204" mass="22112">MSNEEQAQKDDAQPVNEAAIDATAEQADAEVEELSAEQARILELEAALAASEATLAAQKDSVMRAIADADNVRKRAEGEVDKARKFALEKFASELLPVADNLERALQVADKENEAIKPVIEGVDITLKSFVSSIEKFGMKVIDPQGETFNPEQHQAMSMQENAELPANTVMAVMQKGYELNGRLLRPAMVMVSRAPEGGVDTQA</sequence>
<dbReference type="EMBL" id="CP000388">
    <property type="protein sequence ID" value="ABG40504.1"/>
    <property type="molecule type" value="Genomic_DNA"/>
</dbReference>
<dbReference type="RefSeq" id="WP_011574799.1">
    <property type="nucleotide sequence ID" value="NC_008228.1"/>
</dbReference>
<dbReference type="SMR" id="Q15UD4"/>
<dbReference type="STRING" id="342610.Patl_1986"/>
<dbReference type="KEGG" id="pat:Patl_1986"/>
<dbReference type="eggNOG" id="COG0576">
    <property type="taxonomic scope" value="Bacteria"/>
</dbReference>
<dbReference type="HOGENOM" id="CLU_057217_6_0_6"/>
<dbReference type="OrthoDB" id="9789811at2"/>
<dbReference type="Proteomes" id="UP000001981">
    <property type="component" value="Chromosome"/>
</dbReference>
<dbReference type="GO" id="GO:0005829">
    <property type="term" value="C:cytosol"/>
    <property type="evidence" value="ECO:0007669"/>
    <property type="project" value="TreeGrafter"/>
</dbReference>
<dbReference type="GO" id="GO:0000774">
    <property type="term" value="F:adenyl-nucleotide exchange factor activity"/>
    <property type="evidence" value="ECO:0007669"/>
    <property type="project" value="InterPro"/>
</dbReference>
<dbReference type="GO" id="GO:0042803">
    <property type="term" value="F:protein homodimerization activity"/>
    <property type="evidence" value="ECO:0007669"/>
    <property type="project" value="InterPro"/>
</dbReference>
<dbReference type="GO" id="GO:0051087">
    <property type="term" value="F:protein-folding chaperone binding"/>
    <property type="evidence" value="ECO:0007669"/>
    <property type="project" value="InterPro"/>
</dbReference>
<dbReference type="GO" id="GO:0051082">
    <property type="term" value="F:unfolded protein binding"/>
    <property type="evidence" value="ECO:0007669"/>
    <property type="project" value="TreeGrafter"/>
</dbReference>
<dbReference type="GO" id="GO:0006457">
    <property type="term" value="P:protein folding"/>
    <property type="evidence" value="ECO:0007669"/>
    <property type="project" value="InterPro"/>
</dbReference>
<dbReference type="CDD" id="cd00446">
    <property type="entry name" value="GrpE"/>
    <property type="match status" value="1"/>
</dbReference>
<dbReference type="FunFam" id="2.30.22.10:FF:000001">
    <property type="entry name" value="Protein GrpE"/>
    <property type="match status" value="1"/>
</dbReference>
<dbReference type="Gene3D" id="3.90.20.20">
    <property type="match status" value="1"/>
</dbReference>
<dbReference type="Gene3D" id="2.30.22.10">
    <property type="entry name" value="Head domain of nucleotide exchange factor GrpE"/>
    <property type="match status" value="1"/>
</dbReference>
<dbReference type="HAMAP" id="MF_01151">
    <property type="entry name" value="GrpE"/>
    <property type="match status" value="1"/>
</dbReference>
<dbReference type="InterPro" id="IPR000740">
    <property type="entry name" value="GrpE"/>
</dbReference>
<dbReference type="InterPro" id="IPR013805">
    <property type="entry name" value="GrpE_coiled_coil"/>
</dbReference>
<dbReference type="InterPro" id="IPR009012">
    <property type="entry name" value="GrpE_head"/>
</dbReference>
<dbReference type="NCBIfam" id="NF010737">
    <property type="entry name" value="PRK14139.1"/>
    <property type="match status" value="1"/>
</dbReference>
<dbReference type="NCBIfam" id="NF010738">
    <property type="entry name" value="PRK14140.1"/>
    <property type="match status" value="1"/>
</dbReference>
<dbReference type="NCBIfam" id="NF010748">
    <property type="entry name" value="PRK14150.1"/>
    <property type="match status" value="1"/>
</dbReference>
<dbReference type="PANTHER" id="PTHR21237">
    <property type="entry name" value="GRPE PROTEIN"/>
    <property type="match status" value="1"/>
</dbReference>
<dbReference type="PANTHER" id="PTHR21237:SF23">
    <property type="entry name" value="GRPE PROTEIN HOMOLOG, MITOCHONDRIAL"/>
    <property type="match status" value="1"/>
</dbReference>
<dbReference type="Pfam" id="PF01025">
    <property type="entry name" value="GrpE"/>
    <property type="match status" value="1"/>
</dbReference>
<dbReference type="PRINTS" id="PR00773">
    <property type="entry name" value="GRPEPROTEIN"/>
</dbReference>
<dbReference type="SUPFAM" id="SSF58014">
    <property type="entry name" value="Coiled-coil domain of nucleotide exchange factor GrpE"/>
    <property type="match status" value="1"/>
</dbReference>
<dbReference type="SUPFAM" id="SSF51064">
    <property type="entry name" value="Head domain of nucleotide exchange factor GrpE"/>
    <property type="match status" value="1"/>
</dbReference>
<dbReference type="PROSITE" id="PS01071">
    <property type="entry name" value="GRPE"/>
    <property type="match status" value="1"/>
</dbReference>
<gene>
    <name evidence="1" type="primary">grpE</name>
    <name type="ordered locus">Patl_1986</name>
</gene>
<protein>
    <recommendedName>
        <fullName evidence="1">Protein GrpE</fullName>
    </recommendedName>
    <alternativeName>
        <fullName evidence="1">HSP-70 cofactor</fullName>
    </alternativeName>
</protein>
<name>GRPE_PSEA6</name>
<reference key="1">
    <citation type="submission" date="2006-06" db="EMBL/GenBank/DDBJ databases">
        <title>Complete sequence of Pseudoalteromonas atlantica T6c.</title>
        <authorList>
            <consortium name="US DOE Joint Genome Institute"/>
            <person name="Copeland A."/>
            <person name="Lucas S."/>
            <person name="Lapidus A."/>
            <person name="Barry K."/>
            <person name="Detter J.C."/>
            <person name="Glavina del Rio T."/>
            <person name="Hammon N."/>
            <person name="Israni S."/>
            <person name="Dalin E."/>
            <person name="Tice H."/>
            <person name="Pitluck S."/>
            <person name="Saunders E."/>
            <person name="Brettin T."/>
            <person name="Bruce D."/>
            <person name="Han C."/>
            <person name="Tapia R."/>
            <person name="Gilna P."/>
            <person name="Schmutz J."/>
            <person name="Larimer F."/>
            <person name="Land M."/>
            <person name="Hauser L."/>
            <person name="Kyrpides N."/>
            <person name="Kim E."/>
            <person name="Karls A.C."/>
            <person name="Bartlett D."/>
            <person name="Higgins B.P."/>
            <person name="Richardson P."/>
        </authorList>
    </citation>
    <scope>NUCLEOTIDE SEQUENCE [LARGE SCALE GENOMIC DNA]</scope>
    <source>
        <strain>T6c / ATCC BAA-1087</strain>
    </source>
</reference>
<accession>Q15UD4</accession>